<reference key="1">
    <citation type="submission" date="2004-06" db="EMBL/GenBank/DDBJ databases">
        <authorList>
            <consortium name="NIH - Xenopus Gene Collection (XGC) project"/>
        </authorList>
    </citation>
    <scope>NUCLEOTIDE SEQUENCE [LARGE SCALE MRNA]</scope>
    <source>
        <tissue>Embryo</tissue>
    </source>
</reference>
<dbReference type="EMBL" id="BC074669">
    <property type="protein sequence ID" value="AAH74669.1"/>
    <property type="molecule type" value="mRNA"/>
</dbReference>
<dbReference type="RefSeq" id="NP_001004850.1">
    <property type="nucleotide sequence ID" value="NM_001004850.1"/>
</dbReference>
<dbReference type="FunCoup" id="Q6GL42">
    <property type="interactions" value="1121"/>
</dbReference>
<dbReference type="GlyCosmos" id="Q6GL42">
    <property type="glycosylation" value="3 sites, No reported glycans"/>
</dbReference>
<dbReference type="PaxDb" id="8364-ENSXETP00000049766"/>
<dbReference type="DNASU" id="448136"/>
<dbReference type="GeneID" id="448136"/>
<dbReference type="KEGG" id="xtr:448136"/>
<dbReference type="AGR" id="Xenbase:XB-GENE-5851741"/>
<dbReference type="CTD" id="55254"/>
<dbReference type="Xenbase" id="XB-GENE-5851741">
    <property type="gene designation" value="tmem39a"/>
</dbReference>
<dbReference type="eggNOG" id="KOG3828">
    <property type="taxonomic scope" value="Eukaryota"/>
</dbReference>
<dbReference type="HOGENOM" id="CLU_028992_0_0_1"/>
<dbReference type="InParanoid" id="Q6GL42"/>
<dbReference type="OMA" id="RFKQLIF"/>
<dbReference type="OrthoDB" id="5862608at2759"/>
<dbReference type="PhylomeDB" id="Q6GL42"/>
<dbReference type="TreeFam" id="TF321110"/>
<dbReference type="Proteomes" id="UP000008143">
    <property type="component" value="Chromosome 2"/>
</dbReference>
<dbReference type="Bgee" id="ENSXETG00000023015">
    <property type="expression patterns" value="Expressed in neurula embryo and 12 other cell types or tissues"/>
</dbReference>
<dbReference type="GO" id="GO:0005789">
    <property type="term" value="C:endoplasmic reticulum membrane"/>
    <property type="evidence" value="ECO:0000250"/>
    <property type="project" value="UniProtKB"/>
</dbReference>
<dbReference type="GO" id="GO:0006914">
    <property type="term" value="P:autophagy"/>
    <property type="evidence" value="ECO:0007669"/>
    <property type="project" value="UniProtKB-KW"/>
</dbReference>
<dbReference type="GO" id="GO:1902902">
    <property type="term" value="P:negative regulation of autophagosome assembly"/>
    <property type="evidence" value="ECO:0000250"/>
    <property type="project" value="UniProtKB"/>
</dbReference>
<dbReference type="GO" id="GO:1901097">
    <property type="term" value="P:negative regulation of autophagosome maturation"/>
    <property type="evidence" value="ECO:0000250"/>
    <property type="project" value="UniProtKB"/>
</dbReference>
<dbReference type="InterPro" id="IPR019397">
    <property type="entry name" value="Uncharacterised_TMEM39"/>
</dbReference>
<dbReference type="PANTHER" id="PTHR12995">
    <property type="entry name" value="FI21814P1"/>
    <property type="match status" value="1"/>
</dbReference>
<dbReference type="PANTHER" id="PTHR12995:SF3">
    <property type="entry name" value="TRANSMEMBRANE PROTEIN 39A"/>
    <property type="match status" value="1"/>
</dbReference>
<dbReference type="Pfam" id="PF10271">
    <property type="entry name" value="Tmp39"/>
    <property type="match status" value="1"/>
</dbReference>
<gene>
    <name type="primary">tmem39a</name>
</gene>
<protein>
    <recommendedName>
        <fullName>Transmembrane protein 39A</fullName>
    </recommendedName>
</protein>
<accession>Q6GL42</accession>
<feature type="chain" id="PRO_0000279230" description="Transmembrane protein 39A">
    <location>
        <begin position="1"/>
        <end position="488"/>
    </location>
</feature>
<feature type="transmembrane region" description="Helical" evidence="2">
    <location>
        <begin position="72"/>
        <end position="92"/>
    </location>
</feature>
<feature type="transmembrane region" description="Helical" evidence="2">
    <location>
        <begin position="110"/>
        <end position="130"/>
    </location>
</feature>
<feature type="transmembrane region" description="Helical" evidence="2">
    <location>
        <begin position="155"/>
        <end position="175"/>
    </location>
</feature>
<feature type="transmembrane region" description="Helical" evidence="2">
    <location>
        <begin position="182"/>
        <end position="202"/>
    </location>
</feature>
<feature type="transmembrane region" description="Helical" evidence="2">
    <location>
        <begin position="287"/>
        <end position="307"/>
    </location>
</feature>
<feature type="transmembrane region" description="Helical" evidence="2">
    <location>
        <begin position="319"/>
        <end position="339"/>
    </location>
</feature>
<feature type="transmembrane region" description="Helical" evidence="2">
    <location>
        <begin position="420"/>
        <end position="440"/>
    </location>
</feature>
<feature type="transmembrane region" description="Helical" evidence="2">
    <location>
        <begin position="446"/>
        <end position="466"/>
    </location>
</feature>
<feature type="glycosylation site" description="N-linked (GlcNAc...) asparagine" evidence="2">
    <location>
        <position position="31"/>
    </location>
</feature>
<feature type="glycosylation site" description="N-linked (GlcNAc...) asparagine" evidence="2">
    <location>
        <position position="39"/>
    </location>
</feature>
<feature type="glycosylation site" description="N-linked (GlcNAc...) asparagine" evidence="2">
    <location>
        <position position="180"/>
    </location>
</feature>
<comment type="function">
    <text evidence="1">Regulates autophagy by controlling the spatial distribution and levels of the intracellular phosphatidylinositol 4-phosphate (PtdIns(4)P) pools (By similarity). Modulates (PtdIns(4)P) levels by regulating the ER-to-Golgi trafficking of the phosphatidylinositide phosphatase SACM1L (By similarity).</text>
</comment>
<comment type="subcellular location">
    <subcellularLocation>
        <location evidence="1">Endoplasmic reticulum membrane</location>
        <topology evidence="2">Multi-pass membrane protein</topology>
    </subcellularLocation>
</comment>
<comment type="similarity">
    <text evidence="3">Belongs to the TMEM39 family.</text>
</comment>
<proteinExistence type="evidence at transcript level"/>
<evidence type="ECO:0000250" key="1">
    <source>
        <dbReference type="UniProtKB" id="Q9NV64"/>
    </source>
</evidence>
<evidence type="ECO:0000255" key="2"/>
<evidence type="ECO:0000305" key="3"/>
<sequence length="488" mass="55665">MPGGRRGPSRQQLSRSALPSLQTLVGGTCGNGTGLRNRNGSAIGLSAPPITALITPEPVRHCHIPELPLDGGLLFEFLFFIYLLVALFIQYINIYKSVWWYPYNHPASCTSLNFHLIDYHLAAFITVMLARRLVWALISEASQVGTSSMVHYAALITARLVLLTLCGWVFCWTLVNLFRNHSVLNLLFLGYPFGVYVPLCCFHQDSRSQPLPTDCGYLVQDPLVDDGANGMATLVRPRDFLSLLRESLREQFNSTPSIPSHSCPLSPDLIRNEVECLKADFNRRIKEVLFNSLFSAYYVAFLPLCFVKSTQYYDMRWSCEHLIMVWINAFVMLSTQLLPPKYCDLLHRSASHLGKWQKLEHGSYSNAPQHIWSENTVWPQGVLVRHSRSLYKAVGPYNVAVPSEVSHARFYFLFHRPLRLLNLLLIIEGSLVLYQLYSLLRAEKWNHTLSIALILFCNYYVLFKLLRDRIVLGRAYSYPISSYGLKPH</sequence>
<name>TM39A_XENTR</name>
<organism>
    <name type="scientific">Xenopus tropicalis</name>
    <name type="common">Western clawed frog</name>
    <name type="synonym">Silurana tropicalis</name>
    <dbReference type="NCBI Taxonomy" id="8364"/>
    <lineage>
        <taxon>Eukaryota</taxon>
        <taxon>Metazoa</taxon>
        <taxon>Chordata</taxon>
        <taxon>Craniata</taxon>
        <taxon>Vertebrata</taxon>
        <taxon>Euteleostomi</taxon>
        <taxon>Amphibia</taxon>
        <taxon>Batrachia</taxon>
        <taxon>Anura</taxon>
        <taxon>Pipoidea</taxon>
        <taxon>Pipidae</taxon>
        <taxon>Xenopodinae</taxon>
        <taxon>Xenopus</taxon>
        <taxon>Silurana</taxon>
    </lineage>
</organism>
<keyword id="KW-0072">Autophagy</keyword>
<keyword id="KW-0256">Endoplasmic reticulum</keyword>
<keyword id="KW-0325">Glycoprotein</keyword>
<keyword id="KW-0472">Membrane</keyword>
<keyword id="KW-1185">Reference proteome</keyword>
<keyword id="KW-0812">Transmembrane</keyword>
<keyword id="KW-1133">Transmembrane helix</keyword>